<name>PYRG_VIBA3</name>
<feature type="chain" id="PRO_1000164966" description="CTP synthase">
    <location>
        <begin position="1"/>
        <end position="546"/>
    </location>
</feature>
<feature type="domain" description="Glutamine amidotransferase type-1" evidence="1">
    <location>
        <begin position="291"/>
        <end position="542"/>
    </location>
</feature>
<feature type="region of interest" description="Amidoligase domain" evidence="1">
    <location>
        <begin position="1"/>
        <end position="266"/>
    </location>
</feature>
<feature type="active site" description="Nucleophile; for glutamine hydrolysis" evidence="1">
    <location>
        <position position="379"/>
    </location>
</feature>
<feature type="active site" evidence="1">
    <location>
        <position position="515"/>
    </location>
</feature>
<feature type="active site" evidence="1">
    <location>
        <position position="517"/>
    </location>
</feature>
<feature type="binding site" evidence="1">
    <location>
        <position position="14"/>
    </location>
    <ligand>
        <name>CTP</name>
        <dbReference type="ChEBI" id="CHEBI:37563"/>
        <note>allosteric inhibitor</note>
    </ligand>
</feature>
<feature type="binding site" evidence="1">
    <location>
        <position position="14"/>
    </location>
    <ligand>
        <name>UTP</name>
        <dbReference type="ChEBI" id="CHEBI:46398"/>
    </ligand>
</feature>
<feature type="binding site" evidence="1">
    <location>
        <begin position="15"/>
        <end position="20"/>
    </location>
    <ligand>
        <name>ATP</name>
        <dbReference type="ChEBI" id="CHEBI:30616"/>
    </ligand>
</feature>
<feature type="binding site" evidence="1">
    <location>
        <position position="72"/>
    </location>
    <ligand>
        <name>ATP</name>
        <dbReference type="ChEBI" id="CHEBI:30616"/>
    </ligand>
</feature>
<feature type="binding site" evidence="1">
    <location>
        <position position="72"/>
    </location>
    <ligand>
        <name>Mg(2+)</name>
        <dbReference type="ChEBI" id="CHEBI:18420"/>
    </ligand>
</feature>
<feature type="binding site" evidence="1">
    <location>
        <position position="140"/>
    </location>
    <ligand>
        <name>Mg(2+)</name>
        <dbReference type="ChEBI" id="CHEBI:18420"/>
    </ligand>
</feature>
<feature type="binding site" evidence="1">
    <location>
        <begin position="147"/>
        <end position="149"/>
    </location>
    <ligand>
        <name>CTP</name>
        <dbReference type="ChEBI" id="CHEBI:37563"/>
        <note>allosteric inhibitor</note>
    </ligand>
</feature>
<feature type="binding site" evidence="1">
    <location>
        <begin position="187"/>
        <end position="192"/>
    </location>
    <ligand>
        <name>CTP</name>
        <dbReference type="ChEBI" id="CHEBI:37563"/>
        <note>allosteric inhibitor</note>
    </ligand>
</feature>
<feature type="binding site" evidence="1">
    <location>
        <begin position="187"/>
        <end position="192"/>
    </location>
    <ligand>
        <name>UTP</name>
        <dbReference type="ChEBI" id="CHEBI:46398"/>
    </ligand>
</feature>
<feature type="binding site" evidence="1">
    <location>
        <position position="223"/>
    </location>
    <ligand>
        <name>CTP</name>
        <dbReference type="ChEBI" id="CHEBI:37563"/>
        <note>allosteric inhibitor</note>
    </ligand>
</feature>
<feature type="binding site" evidence="1">
    <location>
        <position position="223"/>
    </location>
    <ligand>
        <name>UTP</name>
        <dbReference type="ChEBI" id="CHEBI:46398"/>
    </ligand>
</feature>
<feature type="binding site" evidence="1">
    <location>
        <begin position="239"/>
        <end position="241"/>
    </location>
    <ligand>
        <name>ATP</name>
        <dbReference type="ChEBI" id="CHEBI:30616"/>
    </ligand>
</feature>
<feature type="binding site" evidence="1">
    <location>
        <position position="352"/>
    </location>
    <ligand>
        <name>L-glutamine</name>
        <dbReference type="ChEBI" id="CHEBI:58359"/>
    </ligand>
</feature>
<feature type="binding site" evidence="1">
    <location>
        <begin position="380"/>
        <end position="383"/>
    </location>
    <ligand>
        <name>L-glutamine</name>
        <dbReference type="ChEBI" id="CHEBI:58359"/>
    </ligand>
</feature>
<feature type="binding site" evidence="1">
    <location>
        <position position="403"/>
    </location>
    <ligand>
        <name>L-glutamine</name>
        <dbReference type="ChEBI" id="CHEBI:58359"/>
    </ligand>
</feature>
<feature type="binding site" evidence="1">
    <location>
        <position position="470"/>
    </location>
    <ligand>
        <name>L-glutamine</name>
        <dbReference type="ChEBI" id="CHEBI:58359"/>
    </ligand>
</feature>
<dbReference type="EC" id="6.3.4.2" evidence="1"/>
<dbReference type="EMBL" id="FM954972">
    <property type="protein sequence ID" value="CAV19811.1"/>
    <property type="molecule type" value="Genomic_DNA"/>
</dbReference>
<dbReference type="SMR" id="B7VK69"/>
<dbReference type="STRING" id="575788.VS_2609"/>
<dbReference type="MEROPS" id="C26.964"/>
<dbReference type="KEGG" id="vsp:VS_2609"/>
<dbReference type="eggNOG" id="COG0504">
    <property type="taxonomic scope" value="Bacteria"/>
</dbReference>
<dbReference type="HOGENOM" id="CLU_011675_5_0_6"/>
<dbReference type="UniPathway" id="UPA00159">
    <property type="reaction ID" value="UER00277"/>
</dbReference>
<dbReference type="Proteomes" id="UP000009100">
    <property type="component" value="Chromosome 1"/>
</dbReference>
<dbReference type="GO" id="GO:0005829">
    <property type="term" value="C:cytosol"/>
    <property type="evidence" value="ECO:0007669"/>
    <property type="project" value="TreeGrafter"/>
</dbReference>
<dbReference type="GO" id="GO:0005524">
    <property type="term" value="F:ATP binding"/>
    <property type="evidence" value="ECO:0007669"/>
    <property type="project" value="UniProtKB-KW"/>
</dbReference>
<dbReference type="GO" id="GO:0003883">
    <property type="term" value="F:CTP synthase activity"/>
    <property type="evidence" value="ECO:0007669"/>
    <property type="project" value="UniProtKB-UniRule"/>
</dbReference>
<dbReference type="GO" id="GO:0004359">
    <property type="term" value="F:glutaminase activity"/>
    <property type="evidence" value="ECO:0007669"/>
    <property type="project" value="RHEA"/>
</dbReference>
<dbReference type="GO" id="GO:0042802">
    <property type="term" value="F:identical protein binding"/>
    <property type="evidence" value="ECO:0007669"/>
    <property type="project" value="TreeGrafter"/>
</dbReference>
<dbReference type="GO" id="GO:0046872">
    <property type="term" value="F:metal ion binding"/>
    <property type="evidence" value="ECO:0007669"/>
    <property type="project" value="UniProtKB-KW"/>
</dbReference>
<dbReference type="GO" id="GO:0044210">
    <property type="term" value="P:'de novo' CTP biosynthetic process"/>
    <property type="evidence" value="ECO:0007669"/>
    <property type="project" value="UniProtKB-UniRule"/>
</dbReference>
<dbReference type="GO" id="GO:0019856">
    <property type="term" value="P:pyrimidine nucleobase biosynthetic process"/>
    <property type="evidence" value="ECO:0007669"/>
    <property type="project" value="TreeGrafter"/>
</dbReference>
<dbReference type="CDD" id="cd03113">
    <property type="entry name" value="CTPS_N"/>
    <property type="match status" value="1"/>
</dbReference>
<dbReference type="CDD" id="cd01746">
    <property type="entry name" value="GATase1_CTP_Synthase"/>
    <property type="match status" value="1"/>
</dbReference>
<dbReference type="FunFam" id="3.40.50.300:FF:000009">
    <property type="entry name" value="CTP synthase"/>
    <property type="match status" value="1"/>
</dbReference>
<dbReference type="FunFam" id="3.40.50.880:FF:000002">
    <property type="entry name" value="CTP synthase"/>
    <property type="match status" value="1"/>
</dbReference>
<dbReference type="Gene3D" id="3.40.50.880">
    <property type="match status" value="1"/>
</dbReference>
<dbReference type="Gene3D" id="3.40.50.300">
    <property type="entry name" value="P-loop containing nucleotide triphosphate hydrolases"/>
    <property type="match status" value="1"/>
</dbReference>
<dbReference type="HAMAP" id="MF_01227">
    <property type="entry name" value="PyrG"/>
    <property type="match status" value="1"/>
</dbReference>
<dbReference type="InterPro" id="IPR029062">
    <property type="entry name" value="Class_I_gatase-like"/>
</dbReference>
<dbReference type="InterPro" id="IPR004468">
    <property type="entry name" value="CTP_synthase"/>
</dbReference>
<dbReference type="InterPro" id="IPR017456">
    <property type="entry name" value="CTP_synthase_N"/>
</dbReference>
<dbReference type="InterPro" id="IPR017926">
    <property type="entry name" value="GATASE"/>
</dbReference>
<dbReference type="InterPro" id="IPR033828">
    <property type="entry name" value="GATase1_CTP_Synthase"/>
</dbReference>
<dbReference type="InterPro" id="IPR027417">
    <property type="entry name" value="P-loop_NTPase"/>
</dbReference>
<dbReference type="NCBIfam" id="NF003792">
    <property type="entry name" value="PRK05380.1"/>
    <property type="match status" value="1"/>
</dbReference>
<dbReference type="NCBIfam" id="TIGR00337">
    <property type="entry name" value="PyrG"/>
    <property type="match status" value="1"/>
</dbReference>
<dbReference type="PANTHER" id="PTHR11550">
    <property type="entry name" value="CTP SYNTHASE"/>
    <property type="match status" value="1"/>
</dbReference>
<dbReference type="PANTHER" id="PTHR11550:SF0">
    <property type="entry name" value="CTP SYNTHASE-RELATED"/>
    <property type="match status" value="1"/>
</dbReference>
<dbReference type="Pfam" id="PF06418">
    <property type="entry name" value="CTP_synth_N"/>
    <property type="match status" value="1"/>
</dbReference>
<dbReference type="Pfam" id="PF00117">
    <property type="entry name" value="GATase"/>
    <property type="match status" value="1"/>
</dbReference>
<dbReference type="SUPFAM" id="SSF52317">
    <property type="entry name" value="Class I glutamine amidotransferase-like"/>
    <property type="match status" value="1"/>
</dbReference>
<dbReference type="SUPFAM" id="SSF52540">
    <property type="entry name" value="P-loop containing nucleoside triphosphate hydrolases"/>
    <property type="match status" value="1"/>
</dbReference>
<dbReference type="PROSITE" id="PS51273">
    <property type="entry name" value="GATASE_TYPE_1"/>
    <property type="match status" value="1"/>
</dbReference>
<gene>
    <name evidence="1" type="primary">pyrG</name>
    <name type="ordered locus">VS_2609</name>
</gene>
<proteinExistence type="inferred from homology"/>
<organism>
    <name type="scientific">Vibrio atlanticus (strain LGP32)</name>
    <name type="common">Vibrio splendidus (strain Mel32)</name>
    <dbReference type="NCBI Taxonomy" id="575788"/>
    <lineage>
        <taxon>Bacteria</taxon>
        <taxon>Pseudomonadati</taxon>
        <taxon>Pseudomonadota</taxon>
        <taxon>Gammaproteobacteria</taxon>
        <taxon>Vibrionales</taxon>
        <taxon>Vibrionaceae</taxon>
        <taxon>Vibrio</taxon>
    </lineage>
</organism>
<accession>B7VK69</accession>
<comment type="function">
    <text evidence="1">Catalyzes the ATP-dependent amination of UTP to CTP with either L-glutamine or ammonia as the source of nitrogen. Regulates intracellular CTP levels through interactions with the four ribonucleotide triphosphates.</text>
</comment>
<comment type="catalytic activity">
    <reaction evidence="1">
        <text>UTP + L-glutamine + ATP + H2O = CTP + L-glutamate + ADP + phosphate + 2 H(+)</text>
        <dbReference type="Rhea" id="RHEA:26426"/>
        <dbReference type="ChEBI" id="CHEBI:15377"/>
        <dbReference type="ChEBI" id="CHEBI:15378"/>
        <dbReference type="ChEBI" id="CHEBI:29985"/>
        <dbReference type="ChEBI" id="CHEBI:30616"/>
        <dbReference type="ChEBI" id="CHEBI:37563"/>
        <dbReference type="ChEBI" id="CHEBI:43474"/>
        <dbReference type="ChEBI" id="CHEBI:46398"/>
        <dbReference type="ChEBI" id="CHEBI:58359"/>
        <dbReference type="ChEBI" id="CHEBI:456216"/>
        <dbReference type="EC" id="6.3.4.2"/>
    </reaction>
</comment>
<comment type="catalytic activity">
    <reaction evidence="1">
        <text>L-glutamine + H2O = L-glutamate + NH4(+)</text>
        <dbReference type="Rhea" id="RHEA:15889"/>
        <dbReference type="ChEBI" id="CHEBI:15377"/>
        <dbReference type="ChEBI" id="CHEBI:28938"/>
        <dbReference type="ChEBI" id="CHEBI:29985"/>
        <dbReference type="ChEBI" id="CHEBI:58359"/>
    </reaction>
</comment>
<comment type="catalytic activity">
    <reaction evidence="1">
        <text>UTP + NH4(+) + ATP = CTP + ADP + phosphate + 2 H(+)</text>
        <dbReference type="Rhea" id="RHEA:16597"/>
        <dbReference type="ChEBI" id="CHEBI:15378"/>
        <dbReference type="ChEBI" id="CHEBI:28938"/>
        <dbReference type="ChEBI" id="CHEBI:30616"/>
        <dbReference type="ChEBI" id="CHEBI:37563"/>
        <dbReference type="ChEBI" id="CHEBI:43474"/>
        <dbReference type="ChEBI" id="CHEBI:46398"/>
        <dbReference type="ChEBI" id="CHEBI:456216"/>
    </reaction>
</comment>
<comment type="activity regulation">
    <text evidence="1">Allosterically activated by GTP, when glutamine is the substrate; GTP has no effect on the reaction when ammonia is the substrate. The allosteric effector GTP functions by stabilizing the protein conformation that binds the tetrahedral intermediate(s) formed during glutamine hydrolysis. Inhibited by the product CTP, via allosteric rather than competitive inhibition.</text>
</comment>
<comment type="pathway">
    <text evidence="1">Pyrimidine metabolism; CTP biosynthesis via de novo pathway; CTP from UDP: step 2/2.</text>
</comment>
<comment type="subunit">
    <text evidence="1">Homotetramer.</text>
</comment>
<comment type="miscellaneous">
    <text evidence="1">CTPSs have evolved a hybrid strategy for distinguishing between UTP and CTP. The overlapping regions of the product feedback inhibitory and substrate sites recognize a common feature in both compounds, the triphosphate moiety. To differentiate isosteric substrate and product pyrimidine rings, an additional pocket far from the expected kinase/ligase catalytic site, specifically recognizes the cytosine and ribose portions of the product inhibitor.</text>
</comment>
<comment type="similarity">
    <text evidence="1">Belongs to the CTP synthase family.</text>
</comment>
<protein>
    <recommendedName>
        <fullName evidence="1">CTP synthase</fullName>
        <ecNumber evidence="1">6.3.4.2</ecNumber>
    </recommendedName>
    <alternativeName>
        <fullName evidence="1">Cytidine 5'-triphosphate synthase</fullName>
    </alternativeName>
    <alternativeName>
        <fullName evidence="1">Cytidine triphosphate synthetase</fullName>
        <shortName evidence="1">CTP synthetase</shortName>
        <shortName evidence="1">CTPS</shortName>
    </alternativeName>
    <alternativeName>
        <fullName evidence="1">UTP--ammonia ligase</fullName>
    </alternativeName>
</protein>
<evidence type="ECO:0000255" key="1">
    <source>
        <dbReference type="HAMAP-Rule" id="MF_01227"/>
    </source>
</evidence>
<reference key="1">
    <citation type="submission" date="2009-02" db="EMBL/GenBank/DDBJ databases">
        <title>Vibrio splendidus str. LGP32 complete genome.</title>
        <authorList>
            <person name="Mazel D."/>
            <person name="Le Roux F."/>
        </authorList>
    </citation>
    <scope>NUCLEOTIDE SEQUENCE [LARGE SCALE GENOMIC DNA]</scope>
    <source>
        <strain>LGP32</strain>
    </source>
</reference>
<keyword id="KW-0067">ATP-binding</keyword>
<keyword id="KW-0315">Glutamine amidotransferase</keyword>
<keyword id="KW-0436">Ligase</keyword>
<keyword id="KW-0460">Magnesium</keyword>
<keyword id="KW-0479">Metal-binding</keyword>
<keyword id="KW-0547">Nucleotide-binding</keyword>
<keyword id="KW-0665">Pyrimidine biosynthesis</keyword>
<sequence>MTTNYIFVTGGVVSSLGKGIAAASLAAILEARGLKVTMMKLDPYINVDPGTMSPTQHGEVFVTEDGAETDLDLGHYERFIRTKMTKRNNFTAGRVYSDVLAKERRGDYLGATIQVIPHITNSIKERVISGAAGHDIALVEVGGTVGDIESLPFMEAIRQLAVELGRERAMFMHLTLVPYLAAAGEVKTKPTQHSVKELLSIGIQPDILVCRSDRNIPSNERKKIALFCNVQENAVISMRDVDSIYKIPQLIKAQGTDELVCKRFGITAPEADLSEWEQVIYEEANPTGEVTIGMVGKYIELPDAYKSVNEALKHAGLKNRLSVNIKYVDSQDVESRGVEVLEGLDAILVPGGFGDRGVEGKILAAQYARENKVPYLGICLGMQVALIEYARNVAKMEGAHSSEFCTETKYPVVGLITEWTDGEGKVEERTETSDLGGTMRLGSQLCHLAKGTKAYELYGSATIHERHRHRYEVNNNLRPQIEKAGLKVSGLSADKKLVEVIENPNHPWFVAAQFHPEFTSTPRDGHPLFAGFVKAAGEFQRGELEK</sequence>